<evidence type="ECO:0000255" key="1">
    <source>
        <dbReference type="HAMAP-Rule" id="MF_01006"/>
    </source>
</evidence>
<sequence length="281" mass="31810">MYLIEILKSIFFGIVEGITEWLPISSTGHLILAEEFIQYQNQNEAFMSMFNVVIQLGAILAVMVIYFNKLNPFKPTKDKQEVRKTWRLWLKVLIATLPLLGVFKFDDWFDTHFHNMVSVALMLIIYGVAFIYLEKRNKARAIEPSVTELDKLPYTTAFYIGLFQVLALLPGTSRSGATIVGGLLNGTSRSVVTEFTFYLGIPVMFGASALKIFKFVKAGELLSFGQLFLLLVAMGVAFAVSMVAIRFLTSYVKKHDFTLFGKYRIVLGSVLLLYSFVRLFV</sequence>
<feature type="chain" id="PRO_1000148828" description="Undecaprenyl-diphosphatase">
    <location>
        <begin position="1"/>
        <end position="281"/>
    </location>
</feature>
<feature type="transmembrane region" description="Helical" evidence="1">
    <location>
        <begin position="4"/>
        <end position="24"/>
    </location>
</feature>
<feature type="transmembrane region" description="Helical" evidence="1">
    <location>
        <begin position="45"/>
        <end position="65"/>
    </location>
</feature>
<feature type="transmembrane region" description="Helical" evidence="1">
    <location>
        <begin position="89"/>
        <end position="109"/>
    </location>
</feature>
<feature type="transmembrane region" description="Helical" evidence="1">
    <location>
        <begin position="113"/>
        <end position="133"/>
    </location>
</feature>
<feature type="transmembrane region" description="Helical" evidence="1">
    <location>
        <begin position="152"/>
        <end position="172"/>
    </location>
</feature>
<feature type="transmembrane region" description="Helical" evidence="1">
    <location>
        <begin position="190"/>
        <end position="210"/>
    </location>
</feature>
<feature type="transmembrane region" description="Helical" evidence="1">
    <location>
        <begin position="225"/>
        <end position="245"/>
    </location>
</feature>
<feature type="transmembrane region" description="Helical" evidence="1">
    <location>
        <begin position="257"/>
        <end position="277"/>
    </location>
</feature>
<name>UPPP_STRP7</name>
<accession>C1C5J2</accession>
<organism>
    <name type="scientific">Streptococcus pneumoniae (strain 70585)</name>
    <dbReference type="NCBI Taxonomy" id="488221"/>
    <lineage>
        <taxon>Bacteria</taxon>
        <taxon>Bacillati</taxon>
        <taxon>Bacillota</taxon>
        <taxon>Bacilli</taxon>
        <taxon>Lactobacillales</taxon>
        <taxon>Streptococcaceae</taxon>
        <taxon>Streptococcus</taxon>
    </lineage>
</organism>
<keyword id="KW-0046">Antibiotic resistance</keyword>
<keyword id="KW-1003">Cell membrane</keyword>
<keyword id="KW-0133">Cell shape</keyword>
<keyword id="KW-0961">Cell wall biogenesis/degradation</keyword>
<keyword id="KW-0378">Hydrolase</keyword>
<keyword id="KW-0472">Membrane</keyword>
<keyword id="KW-0573">Peptidoglycan synthesis</keyword>
<keyword id="KW-0812">Transmembrane</keyword>
<keyword id="KW-1133">Transmembrane helix</keyword>
<gene>
    <name evidence="1" type="primary">uppP</name>
    <name type="ordered locus">SP70585_0528</name>
</gene>
<protein>
    <recommendedName>
        <fullName evidence="1">Undecaprenyl-diphosphatase</fullName>
        <ecNumber evidence="1">3.6.1.27</ecNumber>
    </recommendedName>
    <alternativeName>
        <fullName evidence="1">Bacitracin resistance protein</fullName>
    </alternativeName>
    <alternativeName>
        <fullName evidence="1">Undecaprenyl pyrophosphate phosphatase</fullName>
    </alternativeName>
</protein>
<proteinExistence type="inferred from homology"/>
<dbReference type="EC" id="3.6.1.27" evidence="1"/>
<dbReference type="EMBL" id="CP000918">
    <property type="protein sequence ID" value="ACO17334.1"/>
    <property type="molecule type" value="Genomic_DNA"/>
</dbReference>
<dbReference type="RefSeq" id="WP_000280773.1">
    <property type="nucleotide sequence ID" value="NC_012468.1"/>
</dbReference>
<dbReference type="SMR" id="C1C5J2"/>
<dbReference type="KEGG" id="snm:SP70585_0528"/>
<dbReference type="HOGENOM" id="CLU_060296_2_0_9"/>
<dbReference type="Proteomes" id="UP000002211">
    <property type="component" value="Chromosome"/>
</dbReference>
<dbReference type="GO" id="GO:0005886">
    <property type="term" value="C:plasma membrane"/>
    <property type="evidence" value="ECO:0007669"/>
    <property type="project" value="UniProtKB-SubCell"/>
</dbReference>
<dbReference type="GO" id="GO:0050380">
    <property type="term" value="F:undecaprenyl-diphosphatase activity"/>
    <property type="evidence" value="ECO:0007669"/>
    <property type="project" value="UniProtKB-UniRule"/>
</dbReference>
<dbReference type="GO" id="GO:0071555">
    <property type="term" value="P:cell wall organization"/>
    <property type="evidence" value="ECO:0007669"/>
    <property type="project" value="UniProtKB-KW"/>
</dbReference>
<dbReference type="GO" id="GO:0009252">
    <property type="term" value="P:peptidoglycan biosynthetic process"/>
    <property type="evidence" value="ECO:0007669"/>
    <property type="project" value="UniProtKB-KW"/>
</dbReference>
<dbReference type="GO" id="GO:0008360">
    <property type="term" value="P:regulation of cell shape"/>
    <property type="evidence" value="ECO:0007669"/>
    <property type="project" value="UniProtKB-KW"/>
</dbReference>
<dbReference type="GO" id="GO:0046677">
    <property type="term" value="P:response to antibiotic"/>
    <property type="evidence" value="ECO:0007669"/>
    <property type="project" value="UniProtKB-UniRule"/>
</dbReference>
<dbReference type="HAMAP" id="MF_01006">
    <property type="entry name" value="Undec_diphosphatase"/>
    <property type="match status" value="1"/>
</dbReference>
<dbReference type="InterPro" id="IPR003824">
    <property type="entry name" value="UppP"/>
</dbReference>
<dbReference type="NCBIfam" id="NF001391">
    <property type="entry name" value="PRK00281.1-5"/>
    <property type="match status" value="1"/>
</dbReference>
<dbReference type="PANTHER" id="PTHR30622">
    <property type="entry name" value="UNDECAPRENYL-DIPHOSPHATASE"/>
    <property type="match status" value="1"/>
</dbReference>
<dbReference type="PANTHER" id="PTHR30622:SF3">
    <property type="entry name" value="UNDECAPRENYL-DIPHOSPHATASE"/>
    <property type="match status" value="1"/>
</dbReference>
<dbReference type="Pfam" id="PF02673">
    <property type="entry name" value="BacA"/>
    <property type="match status" value="1"/>
</dbReference>
<reference key="1">
    <citation type="journal article" date="2010" name="Genome Biol.">
        <title>Structure and dynamics of the pan-genome of Streptococcus pneumoniae and closely related species.</title>
        <authorList>
            <person name="Donati C."/>
            <person name="Hiller N.L."/>
            <person name="Tettelin H."/>
            <person name="Muzzi A."/>
            <person name="Croucher N.J."/>
            <person name="Angiuoli S.V."/>
            <person name="Oggioni M."/>
            <person name="Dunning Hotopp J.C."/>
            <person name="Hu F.Z."/>
            <person name="Riley D.R."/>
            <person name="Covacci A."/>
            <person name="Mitchell T.J."/>
            <person name="Bentley S.D."/>
            <person name="Kilian M."/>
            <person name="Ehrlich G.D."/>
            <person name="Rappuoli R."/>
            <person name="Moxon E.R."/>
            <person name="Masignani V."/>
        </authorList>
    </citation>
    <scope>NUCLEOTIDE SEQUENCE [LARGE SCALE GENOMIC DNA]</scope>
    <source>
        <strain>70585</strain>
    </source>
</reference>
<comment type="function">
    <text evidence="1">Catalyzes the dephosphorylation of undecaprenyl diphosphate (UPP). Confers resistance to bacitracin.</text>
</comment>
<comment type="catalytic activity">
    <reaction evidence="1">
        <text>di-trans,octa-cis-undecaprenyl diphosphate + H2O = di-trans,octa-cis-undecaprenyl phosphate + phosphate + H(+)</text>
        <dbReference type="Rhea" id="RHEA:28094"/>
        <dbReference type="ChEBI" id="CHEBI:15377"/>
        <dbReference type="ChEBI" id="CHEBI:15378"/>
        <dbReference type="ChEBI" id="CHEBI:43474"/>
        <dbReference type="ChEBI" id="CHEBI:58405"/>
        <dbReference type="ChEBI" id="CHEBI:60392"/>
        <dbReference type="EC" id="3.6.1.27"/>
    </reaction>
</comment>
<comment type="subcellular location">
    <subcellularLocation>
        <location evidence="1">Cell membrane</location>
        <topology evidence="1">Multi-pass membrane protein</topology>
    </subcellularLocation>
</comment>
<comment type="miscellaneous">
    <text>Bacitracin is thought to be involved in the inhibition of peptidoglycan synthesis by sequestering undecaprenyl diphosphate, thereby reducing the pool of lipid carrier available.</text>
</comment>
<comment type="similarity">
    <text evidence="1">Belongs to the UppP family.</text>
</comment>